<protein>
    <recommendedName>
        <fullName evidence="1">tRNA dimethylallyltransferase</fullName>
        <ecNumber evidence="1">2.5.1.75</ecNumber>
    </recommendedName>
    <alternativeName>
        <fullName evidence="1">Dimethylallyl diphosphate:tRNA dimethylallyltransferase</fullName>
        <shortName evidence="1">DMAPP:tRNA dimethylallyltransferase</shortName>
        <shortName evidence="1">DMATase</shortName>
    </alternativeName>
    <alternativeName>
        <fullName evidence="1">Isopentenyl-diphosphate:tRNA isopentenyltransferase</fullName>
        <shortName evidence="1">IPP transferase</shortName>
        <shortName evidence="1">IPPT</shortName>
        <shortName evidence="1">IPTase</shortName>
    </alternativeName>
</protein>
<evidence type="ECO:0000255" key="1">
    <source>
        <dbReference type="HAMAP-Rule" id="MF_00185"/>
    </source>
</evidence>
<gene>
    <name evidence="1" type="primary">miaA</name>
    <name type="ordered locus">AAur_1597</name>
</gene>
<reference key="1">
    <citation type="journal article" date="2006" name="PLoS Genet.">
        <title>Secrets of soil survival revealed by the genome sequence of Arthrobacter aurescens TC1.</title>
        <authorList>
            <person name="Mongodin E.F."/>
            <person name="Shapir N."/>
            <person name="Daugherty S.C."/>
            <person name="DeBoy R.T."/>
            <person name="Emerson J.B."/>
            <person name="Shvartzbeyn A."/>
            <person name="Radune D."/>
            <person name="Vamathevan J."/>
            <person name="Riggs F."/>
            <person name="Grinberg V."/>
            <person name="Khouri H.M."/>
            <person name="Wackett L.P."/>
            <person name="Nelson K.E."/>
            <person name="Sadowsky M.J."/>
        </authorList>
    </citation>
    <scope>NUCLEOTIDE SEQUENCE [LARGE SCALE GENOMIC DNA]</scope>
    <source>
        <strain>TC1</strain>
    </source>
</reference>
<accession>A1R551</accession>
<feature type="chain" id="PRO_0000377068" description="tRNA dimethylallyltransferase">
    <location>
        <begin position="1"/>
        <end position="308"/>
    </location>
</feature>
<feature type="binding site" evidence="1">
    <location>
        <begin position="17"/>
        <end position="24"/>
    </location>
    <ligand>
        <name>ATP</name>
        <dbReference type="ChEBI" id="CHEBI:30616"/>
    </ligand>
</feature>
<feature type="binding site" evidence="1">
    <location>
        <begin position="19"/>
        <end position="24"/>
    </location>
    <ligand>
        <name>substrate</name>
    </ligand>
</feature>
<feature type="site" description="Interaction with substrate tRNA" evidence="1">
    <location>
        <position position="108"/>
    </location>
</feature>
<feature type="site" description="Interaction with substrate tRNA" evidence="1">
    <location>
        <position position="129"/>
    </location>
</feature>
<sequence length="308" mass="33979">MSFTRQEPPRPVIAVVGPTGSGKSDLGVNLALALDGEVINADALQFYRGMDIGTAKITVEERRGVPHHLLDSMDVTQEASVADFQDECRAAINDIHSRGKRAILVGGSGLYVRAALDVLEFPGTDPTLRKELEEECENNGLAPLRARLEEVDPVSAARLGDARRVIRALEVHGLTGRPFSSFMPQREYFQPALQIGLEVDREQLRERLAVRVHRMVEGGLQQEVERLDAVGLRSGKTASRALGYAQFLKVLDGEMTADTAAEETIVATRQFARRQLTWFRADPRITWLGWQDPELVDKAVKVVNAAST</sequence>
<organism>
    <name type="scientific">Paenarthrobacter aurescens (strain TC1)</name>
    <dbReference type="NCBI Taxonomy" id="290340"/>
    <lineage>
        <taxon>Bacteria</taxon>
        <taxon>Bacillati</taxon>
        <taxon>Actinomycetota</taxon>
        <taxon>Actinomycetes</taxon>
        <taxon>Micrococcales</taxon>
        <taxon>Micrococcaceae</taxon>
        <taxon>Paenarthrobacter</taxon>
    </lineage>
</organism>
<proteinExistence type="inferred from homology"/>
<name>MIAA_PAEAT</name>
<keyword id="KW-0067">ATP-binding</keyword>
<keyword id="KW-0460">Magnesium</keyword>
<keyword id="KW-0547">Nucleotide-binding</keyword>
<keyword id="KW-0808">Transferase</keyword>
<keyword id="KW-0819">tRNA processing</keyword>
<dbReference type="EC" id="2.5.1.75" evidence="1"/>
<dbReference type="EMBL" id="CP000474">
    <property type="protein sequence ID" value="ABM08309.1"/>
    <property type="molecule type" value="Genomic_DNA"/>
</dbReference>
<dbReference type="RefSeq" id="WP_011774308.1">
    <property type="nucleotide sequence ID" value="NC_008711.1"/>
</dbReference>
<dbReference type="SMR" id="A1R551"/>
<dbReference type="STRING" id="290340.AAur_1597"/>
<dbReference type="KEGG" id="aau:AAur_1597"/>
<dbReference type="eggNOG" id="COG0324">
    <property type="taxonomic scope" value="Bacteria"/>
</dbReference>
<dbReference type="HOGENOM" id="CLU_032616_0_1_11"/>
<dbReference type="OrthoDB" id="9776390at2"/>
<dbReference type="Proteomes" id="UP000000637">
    <property type="component" value="Chromosome"/>
</dbReference>
<dbReference type="GO" id="GO:0005524">
    <property type="term" value="F:ATP binding"/>
    <property type="evidence" value="ECO:0007669"/>
    <property type="project" value="UniProtKB-UniRule"/>
</dbReference>
<dbReference type="GO" id="GO:0052381">
    <property type="term" value="F:tRNA dimethylallyltransferase activity"/>
    <property type="evidence" value="ECO:0007669"/>
    <property type="project" value="UniProtKB-UniRule"/>
</dbReference>
<dbReference type="GO" id="GO:0006400">
    <property type="term" value="P:tRNA modification"/>
    <property type="evidence" value="ECO:0007669"/>
    <property type="project" value="TreeGrafter"/>
</dbReference>
<dbReference type="Gene3D" id="1.10.20.140">
    <property type="match status" value="1"/>
</dbReference>
<dbReference type="Gene3D" id="3.40.50.300">
    <property type="entry name" value="P-loop containing nucleotide triphosphate hydrolases"/>
    <property type="match status" value="1"/>
</dbReference>
<dbReference type="HAMAP" id="MF_00185">
    <property type="entry name" value="IPP_trans"/>
    <property type="match status" value="1"/>
</dbReference>
<dbReference type="InterPro" id="IPR039657">
    <property type="entry name" value="Dimethylallyltransferase"/>
</dbReference>
<dbReference type="InterPro" id="IPR018022">
    <property type="entry name" value="IPT"/>
</dbReference>
<dbReference type="InterPro" id="IPR027417">
    <property type="entry name" value="P-loop_NTPase"/>
</dbReference>
<dbReference type="NCBIfam" id="TIGR00174">
    <property type="entry name" value="miaA"/>
    <property type="match status" value="1"/>
</dbReference>
<dbReference type="PANTHER" id="PTHR11088">
    <property type="entry name" value="TRNA DIMETHYLALLYLTRANSFERASE"/>
    <property type="match status" value="1"/>
</dbReference>
<dbReference type="PANTHER" id="PTHR11088:SF60">
    <property type="entry name" value="TRNA DIMETHYLALLYLTRANSFERASE"/>
    <property type="match status" value="1"/>
</dbReference>
<dbReference type="Pfam" id="PF01715">
    <property type="entry name" value="IPPT"/>
    <property type="match status" value="1"/>
</dbReference>
<dbReference type="SUPFAM" id="SSF52540">
    <property type="entry name" value="P-loop containing nucleoside triphosphate hydrolases"/>
    <property type="match status" value="2"/>
</dbReference>
<comment type="function">
    <text evidence="1">Catalyzes the transfer of a dimethylallyl group onto the adenine at position 37 in tRNAs that read codons beginning with uridine, leading to the formation of N6-(dimethylallyl)adenosine (i(6)A).</text>
</comment>
<comment type="catalytic activity">
    <reaction evidence="1">
        <text>adenosine(37) in tRNA + dimethylallyl diphosphate = N(6)-dimethylallyladenosine(37) in tRNA + diphosphate</text>
        <dbReference type="Rhea" id="RHEA:26482"/>
        <dbReference type="Rhea" id="RHEA-COMP:10162"/>
        <dbReference type="Rhea" id="RHEA-COMP:10375"/>
        <dbReference type="ChEBI" id="CHEBI:33019"/>
        <dbReference type="ChEBI" id="CHEBI:57623"/>
        <dbReference type="ChEBI" id="CHEBI:74411"/>
        <dbReference type="ChEBI" id="CHEBI:74415"/>
        <dbReference type="EC" id="2.5.1.75"/>
    </reaction>
</comment>
<comment type="cofactor">
    <cofactor evidence="1">
        <name>Mg(2+)</name>
        <dbReference type="ChEBI" id="CHEBI:18420"/>
    </cofactor>
</comment>
<comment type="subunit">
    <text evidence="1">Monomer.</text>
</comment>
<comment type="similarity">
    <text evidence="1">Belongs to the IPP transferase family.</text>
</comment>